<gene>
    <name evidence="2" type="primary">purA</name>
    <name type="ordered locus">c5261</name>
</gene>
<sequence>MGNNVVVLGTQWGDEGKGKIVDLLTERAKYVVRYQGGHNAGHTLVINGEKTVLHLIPSGILRENVTSIIGNGVVLSPAALMKEMKELEDRGIPVRERLLLSEACPLILDYHVALDNAREKARGAKAIGTTGRGIGPAYEDKVARRGLRVGDLFDKETFAEKLKEVMEYHNFQLVNYYKAEAVDYQKVLDDTMAVADILTSMVVDVSDLLDQARQRGDFVMFEGAQGTLLDIDHGTYPYVTSSNTTAGGVATGSGLGPRYVDYVLGILKAYSTRVGAGPFPTELFDETGEFLCKQGNEFGATTGRRRRTGWLDTVAVRRAVQLNSLSGFCLTKLDVLDGLKEVKLCVAYRMPDGREVTTTPLAADDWKGVEPIYETMPGWSESTFGVKDRSGLPQAALNYIKRIEELTGVPIDIISTGPDRTETMILRDPFDA</sequence>
<organism>
    <name type="scientific">Escherichia coli O6:H1 (strain CFT073 / ATCC 700928 / UPEC)</name>
    <dbReference type="NCBI Taxonomy" id="199310"/>
    <lineage>
        <taxon>Bacteria</taxon>
        <taxon>Pseudomonadati</taxon>
        <taxon>Pseudomonadota</taxon>
        <taxon>Gammaproteobacteria</taxon>
        <taxon>Enterobacterales</taxon>
        <taxon>Enterobacteriaceae</taxon>
        <taxon>Escherichia</taxon>
    </lineage>
</organism>
<accession>P0A7D5</accession>
<accession>P12283</accession>
<name>PURA_ECOL6</name>
<proteinExistence type="inferred from homology"/>
<keyword id="KW-0963">Cytoplasm</keyword>
<keyword id="KW-0342">GTP-binding</keyword>
<keyword id="KW-0436">Ligase</keyword>
<keyword id="KW-0460">Magnesium</keyword>
<keyword id="KW-0479">Metal-binding</keyword>
<keyword id="KW-0547">Nucleotide-binding</keyword>
<keyword id="KW-0658">Purine biosynthesis</keyword>
<keyword id="KW-1185">Reference proteome</keyword>
<protein>
    <recommendedName>
        <fullName evidence="2">Adenylosuccinate synthetase</fullName>
        <shortName evidence="2">AMPSase</shortName>
        <shortName evidence="2">AdSS</shortName>
        <ecNumber evidence="2">6.3.4.4</ecNumber>
    </recommendedName>
    <alternativeName>
        <fullName evidence="2">IMP--aspartate ligase</fullName>
    </alternativeName>
</protein>
<feature type="initiator methionine" description="Removed" evidence="1">
    <location>
        <position position="1"/>
    </location>
</feature>
<feature type="chain" id="PRO_0000095176" description="Adenylosuccinate synthetase">
    <location>
        <begin position="2"/>
        <end position="432"/>
    </location>
</feature>
<feature type="active site" description="Proton acceptor" evidence="2">
    <location>
        <position position="14"/>
    </location>
</feature>
<feature type="active site" description="Proton donor" evidence="2">
    <location>
        <position position="42"/>
    </location>
</feature>
<feature type="binding site" evidence="2">
    <location>
        <begin position="13"/>
        <end position="19"/>
    </location>
    <ligand>
        <name>GTP</name>
        <dbReference type="ChEBI" id="CHEBI:37565"/>
    </ligand>
</feature>
<feature type="binding site" description="in other chain" evidence="2">
    <location>
        <begin position="14"/>
        <end position="17"/>
    </location>
    <ligand>
        <name>IMP</name>
        <dbReference type="ChEBI" id="CHEBI:58053"/>
        <note>ligand shared between dimeric partners</note>
    </ligand>
</feature>
<feature type="binding site" evidence="2">
    <location>
        <position position="14"/>
    </location>
    <ligand>
        <name>Mg(2+)</name>
        <dbReference type="ChEBI" id="CHEBI:18420"/>
    </ligand>
</feature>
<feature type="binding site" description="in other chain" evidence="2">
    <location>
        <begin position="39"/>
        <end position="42"/>
    </location>
    <ligand>
        <name>IMP</name>
        <dbReference type="ChEBI" id="CHEBI:58053"/>
        <note>ligand shared between dimeric partners</note>
    </ligand>
</feature>
<feature type="binding site" evidence="2">
    <location>
        <begin position="41"/>
        <end position="43"/>
    </location>
    <ligand>
        <name>GTP</name>
        <dbReference type="ChEBI" id="CHEBI:37565"/>
    </ligand>
</feature>
<feature type="binding site" evidence="2">
    <location>
        <position position="41"/>
    </location>
    <ligand>
        <name>Mg(2+)</name>
        <dbReference type="ChEBI" id="CHEBI:18420"/>
    </ligand>
</feature>
<feature type="binding site" description="in other chain" evidence="2">
    <location>
        <position position="130"/>
    </location>
    <ligand>
        <name>IMP</name>
        <dbReference type="ChEBI" id="CHEBI:58053"/>
        <note>ligand shared between dimeric partners</note>
    </ligand>
</feature>
<feature type="binding site" evidence="2">
    <location>
        <position position="144"/>
    </location>
    <ligand>
        <name>IMP</name>
        <dbReference type="ChEBI" id="CHEBI:58053"/>
        <note>ligand shared between dimeric partners</note>
    </ligand>
</feature>
<feature type="binding site" description="in other chain" evidence="2">
    <location>
        <position position="225"/>
    </location>
    <ligand>
        <name>IMP</name>
        <dbReference type="ChEBI" id="CHEBI:58053"/>
        <note>ligand shared between dimeric partners</note>
    </ligand>
</feature>
<feature type="binding site" description="in other chain" evidence="2">
    <location>
        <position position="240"/>
    </location>
    <ligand>
        <name>IMP</name>
        <dbReference type="ChEBI" id="CHEBI:58053"/>
        <note>ligand shared between dimeric partners</note>
    </ligand>
</feature>
<feature type="binding site" evidence="2">
    <location>
        <begin position="300"/>
        <end position="306"/>
    </location>
    <ligand>
        <name>substrate</name>
    </ligand>
</feature>
<feature type="binding site" description="in other chain" evidence="2">
    <location>
        <position position="304"/>
    </location>
    <ligand>
        <name>IMP</name>
        <dbReference type="ChEBI" id="CHEBI:58053"/>
        <note>ligand shared between dimeric partners</note>
    </ligand>
</feature>
<feature type="binding site" evidence="2">
    <location>
        <position position="306"/>
    </location>
    <ligand>
        <name>GTP</name>
        <dbReference type="ChEBI" id="CHEBI:37565"/>
    </ligand>
</feature>
<feature type="binding site" evidence="2">
    <location>
        <begin position="332"/>
        <end position="334"/>
    </location>
    <ligand>
        <name>GTP</name>
        <dbReference type="ChEBI" id="CHEBI:37565"/>
    </ligand>
</feature>
<feature type="binding site" evidence="2">
    <location>
        <begin position="415"/>
        <end position="417"/>
    </location>
    <ligand>
        <name>GTP</name>
        <dbReference type="ChEBI" id="CHEBI:37565"/>
    </ligand>
</feature>
<comment type="function">
    <text evidence="2">Plays an important role in the de novo pathway of purine nucleotide biosynthesis. Catalyzes the first committed step in the biosynthesis of AMP from IMP.</text>
</comment>
<comment type="catalytic activity">
    <reaction evidence="2">
        <text>IMP + L-aspartate + GTP = N(6)-(1,2-dicarboxyethyl)-AMP + GDP + phosphate + 2 H(+)</text>
        <dbReference type="Rhea" id="RHEA:15753"/>
        <dbReference type="ChEBI" id="CHEBI:15378"/>
        <dbReference type="ChEBI" id="CHEBI:29991"/>
        <dbReference type="ChEBI" id="CHEBI:37565"/>
        <dbReference type="ChEBI" id="CHEBI:43474"/>
        <dbReference type="ChEBI" id="CHEBI:57567"/>
        <dbReference type="ChEBI" id="CHEBI:58053"/>
        <dbReference type="ChEBI" id="CHEBI:58189"/>
        <dbReference type="EC" id="6.3.4.4"/>
    </reaction>
</comment>
<comment type="cofactor">
    <cofactor evidence="2">
        <name>Mg(2+)</name>
        <dbReference type="ChEBI" id="CHEBI:18420"/>
    </cofactor>
    <text evidence="2">Binds 1 Mg(2+) ion per subunit.</text>
</comment>
<comment type="pathway">
    <text evidence="2">Purine metabolism; AMP biosynthesis via de novo pathway; AMP from IMP: step 1/2.</text>
</comment>
<comment type="subunit">
    <text evidence="2">Homodimer.</text>
</comment>
<comment type="subcellular location">
    <subcellularLocation>
        <location evidence="2">Cytoplasm</location>
    </subcellularLocation>
</comment>
<comment type="similarity">
    <text evidence="2">Belongs to the adenylosuccinate synthetase family.</text>
</comment>
<dbReference type="EC" id="6.3.4.4" evidence="2"/>
<dbReference type="EMBL" id="AE014075">
    <property type="protein sequence ID" value="AAN83683.1"/>
    <property type="molecule type" value="Genomic_DNA"/>
</dbReference>
<dbReference type="RefSeq" id="WP_000527955.1">
    <property type="nucleotide sequence ID" value="NZ_CP051263.1"/>
</dbReference>
<dbReference type="SMR" id="P0A7D5"/>
<dbReference type="STRING" id="199310.c5261"/>
<dbReference type="GeneID" id="75202411"/>
<dbReference type="KEGG" id="ecc:c5261"/>
<dbReference type="eggNOG" id="COG0104">
    <property type="taxonomic scope" value="Bacteria"/>
</dbReference>
<dbReference type="HOGENOM" id="CLU_029848_0_0_6"/>
<dbReference type="BioCyc" id="ECOL199310:C5261-MONOMER"/>
<dbReference type="UniPathway" id="UPA00075">
    <property type="reaction ID" value="UER00335"/>
</dbReference>
<dbReference type="Proteomes" id="UP000001410">
    <property type="component" value="Chromosome"/>
</dbReference>
<dbReference type="GO" id="GO:0005737">
    <property type="term" value="C:cytoplasm"/>
    <property type="evidence" value="ECO:0007669"/>
    <property type="project" value="UniProtKB-SubCell"/>
</dbReference>
<dbReference type="GO" id="GO:0004019">
    <property type="term" value="F:adenylosuccinate synthase activity"/>
    <property type="evidence" value="ECO:0007669"/>
    <property type="project" value="UniProtKB-UniRule"/>
</dbReference>
<dbReference type="GO" id="GO:0005525">
    <property type="term" value="F:GTP binding"/>
    <property type="evidence" value="ECO:0007669"/>
    <property type="project" value="UniProtKB-UniRule"/>
</dbReference>
<dbReference type="GO" id="GO:0000287">
    <property type="term" value="F:magnesium ion binding"/>
    <property type="evidence" value="ECO:0007669"/>
    <property type="project" value="UniProtKB-UniRule"/>
</dbReference>
<dbReference type="GO" id="GO:0044208">
    <property type="term" value="P:'de novo' AMP biosynthetic process"/>
    <property type="evidence" value="ECO:0007669"/>
    <property type="project" value="UniProtKB-UniRule"/>
</dbReference>
<dbReference type="GO" id="GO:0046040">
    <property type="term" value="P:IMP metabolic process"/>
    <property type="evidence" value="ECO:0007669"/>
    <property type="project" value="TreeGrafter"/>
</dbReference>
<dbReference type="CDD" id="cd03108">
    <property type="entry name" value="AdSS"/>
    <property type="match status" value="1"/>
</dbReference>
<dbReference type="FunFam" id="1.10.300.10:FF:000001">
    <property type="entry name" value="Adenylosuccinate synthetase"/>
    <property type="match status" value="1"/>
</dbReference>
<dbReference type="FunFam" id="3.90.170.10:FF:000001">
    <property type="entry name" value="Adenylosuccinate synthetase"/>
    <property type="match status" value="1"/>
</dbReference>
<dbReference type="Gene3D" id="3.40.440.10">
    <property type="entry name" value="Adenylosuccinate Synthetase, subunit A, domain 1"/>
    <property type="match status" value="1"/>
</dbReference>
<dbReference type="Gene3D" id="1.10.300.10">
    <property type="entry name" value="Adenylosuccinate Synthetase, subunit A, domain 2"/>
    <property type="match status" value="1"/>
</dbReference>
<dbReference type="Gene3D" id="3.90.170.10">
    <property type="entry name" value="Adenylosuccinate Synthetase, subunit A, domain 3"/>
    <property type="match status" value="1"/>
</dbReference>
<dbReference type="HAMAP" id="MF_00011">
    <property type="entry name" value="Adenylosucc_synth"/>
    <property type="match status" value="1"/>
</dbReference>
<dbReference type="InterPro" id="IPR018220">
    <property type="entry name" value="Adenylosuccin_syn_GTP-bd"/>
</dbReference>
<dbReference type="InterPro" id="IPR033128">
    <property type="entry name" value="Adenylosuccin_syn_Lys_AS"/>
</dbReference>
<dbReference type="InterPro" id="IPR042109">
    <property type="entry name" value="Adenylosuccinate_synth_dom1"/>
</dbReference>
<dbReference type="InterPro" id="IPR042110">
    <property type="entry name" value="Adenylosuccinate_synth_dom2"/>
</dbReference>
<dbReference type="InterPro" id="IPR042111">
    <property type="entry name" value="Adenylosuccinate_synth_dom3"/>
</dbReference>
<dbReference type="InterPro" id="IPR001114">
    <property type="entry name" value="Adenylosuccinate_synthetase"/>
</dbReference>
<dbReference type="InterPro" id="IPR027417">
    <property type="entry name" value="P-loop_NTPase"/>
</dbReference>
<dbReference type="NCBIfam" id="NF002223">
    <property type="entry name" value="PRK01117.1"/>
    <property type="match status" value="1"/>
</dbReference>
<dbReference type="NCBIfam" id="TIGR00184">
    <property type="entry name" value="purA"/>
    <property type="match status" value="1"/>
</dbReference>
<dbReference type="PANTHER" id="PTHR11846">
    <property type="entry name" value="ADENYLOSUCCINATE SYNTHETASE"/>
    <property type="match status" value="1"/>
</dbReference>
<dbReference type="PANTHER" id="PTHR11846:SF0">
    <property type="entry name" value="ADENYLOSUCCINATE SYNTHETASE"/>
    <property type="match status" value="1"/>
</dbReference>
<dbReference type="Pfam" id="PF00709">
    <property type="entry name" value="Adenylsucc_synt"/>
    <property type="match status" value="1"/>
</dbReference>
<dbReference type="SMART" id="SM00788">
    <property type="entry name" value="Adenylsucc_synt"/>
    <property type="match status" value="1"/>
</dbReference>
<dbReference type="SUPFAM" id="SSF52540">
    <property type="entry name" value="P-loop containing nucleoside triphosphate hydrolases"/>
    <property type="match status" value="1"/>
</dbReference>
<dbReference type="PROSITE" id="PS01266">
    <property type="entry name" value="ADENYLOSUCCIN_SYN_1"/>
    <property type="match status" value="1"/>
</dbReference>
<dbReference type="PROSITE" id="PS00513">
    <property type="entry name" value="ADENYLOSUCCIN_SYN_2"/>
    <property type="match status" value="1"/>
</dbReference>
<reference key="1">
    <citation type="journal article" date="2002" name="Proc. Natl. Acad. Sci. U.S.A.">
        <title>Extensive mosaic structure revealed by the complete genome sequence of uropathogenic Escherichia coli.</title>
        <authorList>
            <person name="Welch R.A."/>
            <person name="Burland V."/>
            <person name="Plunkett G. III"/>
            <person name="Redford P."/>
            <person name="Roesch P."/>
            <person name="Rasko D."/>
            <person name="Buckles E.L."/>
            <person name="Liou S.-R."/>
            <person name="Boutin A."/>
            <person name="Hackett J."/>
            <person name="Stroud D."/>
            <person name="Mayhew G.F."/>
            <person name="Rose D.J."/>
            <person name="Zhou S."/>
            <person name="Schwartz D.C."/>
            <person name="Perna N.T."/>
            <person name="Mobley H.L.T."/>
            <person name="Donnenberg M.S."/>
            <person name="Blattner F.R."/>
        </authorList>
    </citation>
    <scope>NUCLEOTIDE SEQUENCE [LARGE SCALE GENOMIC DNA]</scope>
    <source>
        <strain>CFT073 / ATCC 700928 / UPEC</strain>
    </source>
</reference>
<evidence type="ECO:0000250" key="1"/>
<evidence type="ECO:0000255" key="2">
    <source>
        <dbReference type="HAMAP-Rule" id="MF_00011"/>
    </source>
</evidence>